<keyword id="KW-0997">Cell inner membrane</keyword>
<keyword id="KW-1003">Cell membrane</keyword>
<keyword id="KW-0406">Ion transport</keyword>
<keyword id="KW-0464">Manganese</keyword>
<keyword id="KW-0472">Membrane</keyword>
<keyword id="KW-0812">Transmembrane</keyword>
<keyword id="KW-1133">Transmembrane helix</keyword>
<keyword id="KW-0813">Transport</keyword>
<proteinExistence type="inferred from homology"/>
<accession>Q65W61</accession>
<protein>
    <recommendedName>
        <fullName evidence="1">Putative manganese efflux pump MntP</fullName>
    </recommendedName>
</protein>
<feature type="chain" id="PRO_0000155655" description="Putative manganese efflux pump MntP">
    <location>
        <begin position="1"/>
        <end position="188"/>
    </location>
</feature>
<feature type="transmembrane region" description="Helical" evidence="1">
    <location>
        <begin position="3"/>
        <end position="23"/>
    </location>
</feature>
<feature type="transmembrane region" description="Helical" evidence="1">
    <location>
        <begin position="39"/>
        <end position="59"/>
    </location>
</feature>
<feature type="transmembrane region" description="Helical" evidence="1">
    <location>
        <begin position="65"/>
        <end position="85"/>
    </location>
</feature>
<feature type="transmembrane region" description="Helical" evidence="1">
    <location>
        <begin position="110"/>
        <end position="130"/>
    </location>
</feature>
<feature type="transmembrane region" description="Helical" evidence="1">
    <location>
        <begin position="131"/>
        <end position="151"/>
    </location>
</feature>
<feature type="transmembrane region" description="Helical" evidence="1">
    <location>
        <begin position="167"/>
        <end position="187"/>
    </location>
</feature>
<reference key="1">
    <citation type="journal article" date="2004" name="Nat. Biotechnol.">
        <title>The genome sequence of the capnophilic rumen bacterium Mannheimia succiniciproducens.</title>
        <authorList>
            <person name="Hong S.H."/>
            <person name="Kim J.S."/>
            <person name="Lee S.Y."/>
            <person name="In Y.H."/>
            <person name="Choi S.S."/>
            <person name="Rih J.-K."/>
            <person name="Kim C.H."/>
            <person name="Jeong H."/>
            <person name="Hur C.G."/>
            <person name="Kim J.J."/>
        </authorList>
    </citation>
    <scope>NUCLEOTIDE SEQUENCE [LARGE SCALE GENOMIC DNA]</scope>
    <source>
        <strain>KCTC 0769BP / MBEL55E</strain>
    </source>
</reference>
<organism>
    <name type="scientific">Mannheimia succiniciproducens (strain KCTC 0769BP / MBEL55E)</name>
    <dbReference type="NCBI Taxonomy" id="221988"/>
    <lineage>
        <taxon>Bacteria</taxon>
        <taxon>Pseudomonadati</taxon>
        <taxon>Pseudomonadota</taxon>
        <taxon>Gammaproteobacteria</taxon>
        <taxon>Pasteurellales</taxon>
        <taxon>Pasteurellaceae</taxon>
        <taxon>Basfia</taxon>
    </lineage>
</organism>
<name>MNTP_MANSM</name>
<dbReference type="EMBL" id="AE016827">
    <property type="protein sequence ID" value="AAU36799.1"/>
    <property type="molecule type" value="Genomic_DNA"/>
</dbReference>
<dbReference type="RefSeq" id="WP_011199374.1">
    <property type="nucleotide sequence ID" value="NC_006300.1"/>
</dbReference>
<dbReference type="STRING" id="221988.MS0192"/>
<dbReference type="KEGG" id="msu:MS0192"/>
<dbReference type="eggNOG" id="COG1971">
    <property type="taxonomic scope" value="Bacteria"/>
</dbReference>
<dbReference type="HOGENOM" id="CLU_096410_3_0_6"/>
<dbReference type="OrthoDB" id="9811590at2"/>
<dbReference type="Proteomes" id="UP000000607">
    <property type="component" value="Chromosome"/>
</dbReference>
<dbReference type="GO" id="GO:0005886">
    <property type="term" value="C:plasma membrane"/>
    <property type="evidence" value="ECO:0007669"/>
    <property type="project" value="UniProtKB-SubCell"/>
</dbReference>
<dbReference type="GO" id="GO:0005384">
    <property type="term" value="F:manganese ion transmembrane transporter activity"/>
    <property type="evidence" value="ECO:0007669"/>
    <property type="project" value="UniProtKB-UniRule"/>
</dbReference>
<dbReference type="HAMAP" id="MF_01521">
    <property type="entry name" value="MntP_pump"/>
    <property type="match status" value="1"/>
</dbReference>
<dbReference type="InterPro" id="IPR003810">
    <property type="entry name" value="Mntp/YtaF"/>
</dbReference>
<dbReference type="InterPro" id="IPR022929">
    <property type="entry name" value="Put_MntP"/>
</dbReference>
<dbReference type="PANTHER" id="PTHR35529">
    <property type="entry name" value="MANGANESE EFFLUX PUMP MNTP-RELATED"/>
    <property type="match status" value="1"/>
</dbReference>
<dbReference type="PANTHER" id="PTHR35529:SF1">
    <property type="entry name" value="MANGANESE EFFLUX PUMP MNTP-RELATED"/>
    <property type="match status" value="1"/>
</dbReference>
<dbReference type="Pfam" id="PF02659">
    <property type="entry name" value="Mntp"/>
    <property type="match status" value="1"/>
</dbReference>
<comment type="function">
    <text evidence="1">Probably functions as a manganese efflux pump.</text>
</comment>
<comment type="subcellular location">
    <subcellularLocation>
        <location evidence="1">Cell inner membrane</location>
        <topology evidence="1">Multi-pass membrane protein</topology>
    </subcellularLocation>
</comment>
<comment type="similarity">
    <text evidence="1">Belongs to the MntP (TC 9.B.29) family.</text>
</comment>
<sequence length="188" mass="20428">MSLFSLWVMAFGLSMDAFAVSICKGLAMEKFQWCGALKAGLYFGLFQAVMPLIGFLLGVQFSEYITDYDHWVAFFLLALIGVNMLRESLSDEDDEDSCSNDFNFKTMMTLGFATSIDALAVGVTFAFLSVDIYSSVVTIGLITAALSIIGVKSGHFLGKKIKTKAEILGGLILIGLGVKILMEHTLFG</sequence>
<gene>
    <name evidence="1" type="primary">mntP</name>
    <name type="ordered locus">MS0192</name>
</gene>
<evidence type="ECO:0000255" key="1">
    <source>
        <dbReference type="HAMAP-Rule" id="MF_01521"/>
    </source>
</evidence>